<protein>
    <recommendedName>
        <fullName>Probable non-structural 36.3 kDa protein</fullName>
    </recommendedName>
</protein>
<organismHost>
    <name type="scientific">Avena sativa</name>
    <name type="common">Oat</name>
    <dbReference type="NCBI Taxonomy" id="4498"/>
</organismHost>
<organismHost>
    <name type="scientific">Cynodon dactylon</name>
    <name type="common">Bermuda grass</name>
    <name type="synonym">Panicum dactylon</name>
    <dbReference type="NCBI Taxonomy" id="28909"/>
</organismHost>
<organismHost>
    <name type="scientific">Digitaria sanguinalis</name>
    <dbReference type="NCBI Taxonomy" id="121769"/>
</organismHost>
<organismHost>
    <name type="scientific">Echinochloa crus-galli</name>
    <name type="common">Barnyard grass</name>
    <name type="synonym">Panicum crus-galli</name>
    <dbReference type="NCBI Taxonomy" id="90397"/>
</organismHost>
<organismHost>
    <name type="scientific">Hordeum vulgare</name>
    <name type="common">Barley</name>
    <dbReference type="NCBI Taxonomy" id="4513"/>
</organismHost>
<organismHost>
    <name type="scientific">Lolium perenne</name>
    <name type="common">Perennial ryegrass</name>
    <dbReference type="NCBI Taxonomy" id="4522"/>
</organismHost>
<organismHost>
    <name type="scientific">Setaria verticillata</name>
    <dbReference type="NCBI Taxonomy" id="149379"/>
</organismHost>
<organismHost>
    <name type="scientific">Triticum aestivum</name>
    <name type="common">Wheat</name>
    <dbReference type="NCBI Taxonomy" id="4565"/>
</organismHost>
<organismHost>
    <name type="scientific">Zea mays</name>
    <name type="common">Maize</name>
    <dbReference type="NCBI Taxonomy" id="4577"/>
</organismHost>
<dbReference type="EMBL" id="X55701">
    <property type="protein sequence ID" value="CAA39228.1"/>
    <property type="molecule type" value="Genomic_RNA"/>
</dbReference>
<dbReference type="PIR" id="B38545">
    <property type="entry name" value="B38545"/>
</dbReference>
<dbReference type="InterPro" id="IPR009519">
    <property type="entry name" value="FDV_Vp7-2"/>
</dbReference>
<dbReference type="Pfam" id="PF06599">
    <property type="entry name" value="DUF1139"/>
    <property type="match status" value="1"/>
</dbReference>
<name>VP62_MRDV</name>
<sequence>MDYNLSDHYALMCHSAPLEFDPSDPEVDLVNQEFDEDDYTDLDVNLLSDDLSYLNLLATRIKNSPEDTAEIFDSFDIPLPFAELLDQEIGDEWCEIHNFADLRIVENENEFEFVSSHITRHLLIVLNSNPNILWTSTCLLAKLSLIQHVENFDVINYWEAMNRRWELITDELKIGFVFRAFNLKGNQFEVIMKLLGDSLLYPGINVIGKLSMVPMFTVHSIPAYLDHWFRTDDFQRCKFLSFIRFGEITVPKWKKVVVQFYLRQVFSRVRTKVLIANTDVDYWYSLFMRTLVFKSMLSTKNMIKKILNS</sequence>
<gene>
    <name type="primary">S6</name>
</gene>
<feature type="chain" id="PRO_0000222806" description="Probable non-structural 36.3 kDa protein">
    <location>
        <begin position="1"/>
        <end position="309"/>
    </location>
</feature>
<organism>
    <name type="scientific">Maize rough dwarf virus</name>
    <name type="common">MRDV</name>
    <dbReference type="NCBI Taxonomy" id="10989"/>
    <lineage>
        <taxon>Viruses</taxon>
        <taxon>Riboviria</taxon>
        <taxon>Orthornavirae</taxon>
        <taxon>Duplornaviricota</taxon>
        <taxon>Resentoviricetes</taxon>
        <taxon>Reovirales</taxon>
        <taxon>Spinareoviridae</taxon>
        <taxon>Fijivirus</taxon>
    </lineage>
</organism>
<proteinExistence type="predicted"/>
<accession>P22120</accession>
<reference key="1">
    <citation type="journal article" date="1991" name="Virology">
        <title>Cloning of the maize rough dwarf virus genome: molecular confirmation of the plant-reovirus classification scheme and identification of two large nonoverlapping coding domains within a single genomic segment.</title>
        <authorList>
            <person name="Marzachi C."/>
            <person name="Boccardo G."/>
            <person name="Nuss D.L."/>
        </authorList>
    </citation>
    <scope>NUCLEOTIDE SEQUENCE [GENOMIC RNA]</scope>
</reference>